<protein>
    <recommendedName>
        <fullName evidence="1">Cysteine--tRNA ligase</fullName>
        <ecNumber evidence="1">6.1.1.16</ecNumber>
    </recommendedName>
    <alternativeName>
        <fullName evidence="1">Cysteinyl-tRNA synthetase</fullName>
        <shortName evidence="1">CysRS</shortName>
    </alternativeName>
</protein>
<feature type="chain" id="PRO_0000159408" description="Cysteine--tRNA ligase">
    <location>
        <begin position="1"/>
        <end position="488"/>
    </location>
</feature>
<feature type="short sequence motif" description="'HIGH' region">
    <location>
        <begin position="30"/>
        <end position="40"/>
    </location>
</feature>
<feature type="short sequence motif" description="'KMSKS' region">
    <location>
        <begin position="271"/>
        <end position="275"/>
    </location>
</feature>
<feature type="binding site" evidence="1">
    <location>
        <position position="28"/>
    </location>
    <ligand>
        <name>Zn(2+)</name>
        <dbReference type="ChEBI" id="CHEBI:29105"/>
    </ligand>
</feature>
<feature type="binding site" evidence="1">
    <location>
        <position position="209"/>
    </location>
    <ligand>
        <name>Zn(2+)</name>
        <dbReference type="ChEBI" id="CHEBI:29105"/>
    </ligand>
</feature>
<feature type="binding site" evidence="1">
    <location>
        <position position="239"/>
    </location>
    <ligand>
        <name>Zn(2+)</name>
        <dbReference type="ChEBI" id="CHEBI:29105"/>
    </ligand>
</feature>
<feature type="binding site" evidence="1">
    <location>
        <position position="243"/>
    </location>
    <ligand>
        <name>Zn(2+)</name>
        <dbReference type="ChEBI" id="CHEBI:29105"/>
    </ligand>
</feature>
<feature type="binding site" evidence="1">
    <location>
        <position position="274"/>
    </location>
    <ligand>
        <name>ATP</name>
        <dbReference type="ChEBI" id="CHEBI:30616"/>
    </ligand>
</feature>
<reference key="1">
    <citation type="journal article" date="2003" name="Proc. Natl. Acad. Sci. U.S.A.">
        <title>The complete genome sequence of the carcinogenic bacterium Helicobacter hepaticus.</title>
        <authorList>
            <person name="Suerbaum S."/>
            <person name="Josenhans C."/>
            <person name="Sterzenbach T."/>
            <person name="Drescher B."/>
            <person name="Brandt P."/>
            <person name="Bell M."/>
            <person name="Droege M."/>
            <person name="Fartmann B."/>
            <person name="Fischer H.-P."/>
            <person name="Ge Z."/>
            <person name="Hoerster A."/>
            <person name="Holland R."/>
            <person name="Klein K."/>
            <person name="Koenig J."/>
            <person name="Macko L."/>
            <person name="Mendz G.L."/>
            <person name="Nyakatura G."/>
            <person name="Schauer D.B."/>
            <person name="Shen Z."/>
            <person name="Weber J."/>
            <person name="Frosch M."/>
            <person name="Fox J.G."/>
        </authorList>
    </citation>
    <scope>NUCLEOTIDE SEQUENCE [LARGE SCALE GENOMIC DNA]</scope>
    <source>
        <strain>ATCC 51449 / 3B1</strain>
    </source>
</reference>
<evidence type="ECO:0000255" key="1">
    <source>
        <dbReference type="HAMAP-Rule" id="MF_00041"/>
    </source>
</evidence>
<sequence>MITLFDSAKKQKIPFTPIQDNQIRLYVCGPTVYDDAHLGHARSSIVFDLWRRLFLFLGFEVVFVKNFTDIDDKIIKKSLQNNASVQEIGSHYIHSYLKDMASLGVLRADIEPKATDNLPQMCEMIQTLLHKGYAYEGENSDIYLRIHKDKNYGALSQRLEQSHTQSRIQNAQDKLEHNDFALWKGYKGENDIAYDSPFGKGRPGWHIECSAMIEKHLAYQNEEYGIDIHAGGSDLLFPHHENEASQTRCATGREIAKYWLHNGFVNINGEKMSKSLGNSFFIKDALKVYDGEILRNYLLGVHYRLALNFNEEDLLQSKKRLDKLYRLKKRVIESHIQSPQITREEIKQFTHNIKETAKEAHKTFLSSLVEALSDDYNISKALSIIEDMLSTSNEYLDKNPKDKAYKQAIKANLACIEFLLGLGGKSTQSYFQLGLDEKTKQEIESKIAKRQEAKAQKNYALADKLRDELKSQGIEIMDTPQGSTWEKI</sequence>
<name>SYC_HELHP</name>
<comment type="catalytic activity">
    <reaction evidence="1">
        <text>tRNA(Cys) + L-cysteine + ATP = L-cysteinyl-tRNA(Cys) + AMP + diphosphate</text>
        <dbReference type="Rhea" id="RHEA:17773"/>
        <dbReference type="Rhea" id="RHEA-COMP:9661"/>
        <dbReference type="Rhea" id="RHEA-COMP:9679"/>
        <dbReference type="ChEBI" id="CHEBI:30616"/>
        <dbReference type="ChEBI" id="CHEBI:33019"/>
        <dbReference type="ChEBI" id="CHEBI:35235"/>
        <dbReference type="ChEBI" id="CHEBI:78442"/>
        <dbReference type="ChEBI" id="CHEBI:78517"/>
        <dbReference type="ChEBI" id="CHEBI:456215"/>
        <dbReference type="EC" id="6.1.1.16"/>
    </reaction>
</comment>
<comment type="cofactor">
    <cofactor evidence="1">
        <name>Zn(2+)</name>
        <dbReference type="ChEBI" id="CHEBI:29105"/>
    </cofactor>
    <text evidence="1">Binds 1 zinc ion per subunit.</text>
</comment>
<comment type="subunit">
    <text evidence="1">Monomer.</text>
</comment>
<comment type="subcellular location">
    <subcellularLocation>
        <location evidence="1">Cytoplasm</location>
    </subcellularLocation>
</comment>
<comment type="similarity">
    <text evidence="1">Belongs to the class-I aminoacyl-tRNA synthetase family.</text>
</comment>
<accession>Q7VIT7</accession>
<proteinExistence type="inferred from homology"/>
<gene>
    <name evidence="1" type="primary">cysS</name>
    <name type="ordered locus">HH_0517</name>
</gene>
<dbReference type="EC" id="6.1.1.16" evidence="1"/>
<dbReference type="EMBL" id="AE017125">
    <property type="protein sequence ID" value="AAP77114.1"/>
    <property type="molecule type" value="Genomic_DNA"/>
</dbReference>
<dbReference type="SMR" id="Q7VIT7"/>
<dbReference type="STRING" id="235279.HH_0517"/>
<dbReference type="KEGG" id="hhe:HH_0517"/>
<dbReference type="eggNOG" id="COG0215">
    <property type="taxonomic scope" value="Bacteria"/>
</dbReference>
<dbReference type="HOGENOM" id="CLU_013528_0_1_7"/>
<dbReference type="OrthoDB" id="9815130at2"/>
<dbReference type="Proteomes" id="UP000002495">
    <property type="component" value="Chromosome"/>
</dbReference>
<dbReference type="GO" id="GO:0005829">
    <property type="term" value="C:cytosol"/>
    <property type="evidence" value="ECO:0007669"/>
    <property type="project" value="TreeGrafter"/>
</dbReference>
<dbReference type="GO" id="GO:0005524">
    <property type="term" value="F:ATP binding"/>
    <property type="evidence" value="ECO:0007669"/>
    <property type="project" value="UniProtKB-UniRule"/>
</dbReference>
<dbReference type="GO" id="GO:0004817">
    <property type="term" value="F:cysteine-tRNA ligase activity"/>
    <property type="evidence" value="ECO:0007669"/>
    <property type="project" value="UniProtKB-UniRule"/>
</dbReference>
<dbReference type="GO" id="GO:0008270">
    <property type="term" value="F:zinc ion binding"/>
    <property type="evidence" value="ECO:0007669"/>
    <property type="project" value="UniProtKB-UniRule"/>
</dbReference>
<dbReference type="GO" id="GO:0006423">
    <property type="term" value="P:cysteinyl-tRNA aminoacylation"/>
    <property type="evidence" value="ECO:0007669"/>
    <property type="project" value="UniProtKB-UniRule"/>
</dbReference>
<dbReference type="CDD" id="cd00672">
    <property type="entry name" value="CysRS_core"/>
    <property type="match status" value="1"/>
</dbReference>
<dbReference type="Gene3D" id="1.20.120.1910">
    <property type="entry name" value="Cysteine-tRNA ligase, C-terminal anti-codon recognition domain"/>
    <property type="match status" value="1"/>
</dbReference>
<dbReference type="Gene3D" id="3.40.50.620">
    <property type="entry name" value="HUPs"/>
    <property type="match status" value="1"/>
</dbReference>
<dbReference type="HAMAP" id="MF_00041">
    <property type="entry name" value="Cys_tRNA_synth"/>
    <property type="match status" value="1"/>
</dbReference>
<dbReference type="InterPro" id="IPR015803">
    <property type="entry name" value="Cys-tRNA-ligase"/>
</dbReference>
<dbReference type="InterPro" id="IPR024909">
    <property type="entry name" value="Cys-tRNA/MSH_ligase"/>
</dbReference>
<dbReference type="InterPro" id="IPR014729">
    <property type="entry name" value="Rossmann-like_a/b/a_fold"/>
</dbReference>
<dbReference type="InterPro" id="IPR032678">
    <property type="entry name" value="tRNA-synt_1_cat_dom"/>
</dbReference>
<dbReference type="InterPro" id="IPR009080">
    <property type="entry name" value="tRNAsynth_Ia_anticodon-bd"/>
</dbReference>
<dbReference type="NCBIfam" id="TIGR00435">
    <property type="entry name" value="cysS"/>
    <property type="match status" value="1"/>
</dbReference>
<dbReference type="PANTHER" id="PTHR10890:SF3">
    <property type="entry name" value="CYSTEINE--TRNA LIGASE, CYTOPLASMIC"/>
    <property type="match status" value="1"/>
</dbReference>
<dbReference type="PANTHER" id="PTHR10890">
    <property type="entry name" value="CYSTEINYL-TRNA SYNTHETASE"/>
    <property type="match status" value="1"/>
</dbReference>
<dbReference type="Pfam" id="PF01406">
    <property type="entry name" value="tRNA-synt_1e"/>
    <property type="match status" value="1"/>
</dbReference>
<dbReference type="PRINTS" id="PR00983">
    <property type="entry name" value="TRNASYNTHCYS"/>
</dbReference>
<dbReference type="SUPFAM" id="SSF47323">
    <property type="entry name" value="Anticodon-binding domain of a subclass of class I aminoacyl-tRNA synthetases"/>
    <property type="match status" value="1"/>
</dbReference>
<dbReference type="SUPFAM" id="SSF52374">
    <property type="entry name" value="Nucleotidylyl transferase"/>
    <property type="match status" value="1"/>
</dbReference>
<organism>
    <name type="scientific">Helicobacter hepaticus (strain ATCC 51449 / 3B1)</name>
    <dbReference type="NCBI Taxonomy" id="235279"/>
    <lineage>
        <taxon>Bacteria</taxon>
        <taxon>Pseudomonadati</taxon>
        <taxon>Campylobacterota</taxon>
        <taxon>Epsilonproteobacteria</taxon>
        <taxon>Campylobacterales</taxon>
        <taxon>Helicobacteraceae</taxon>
        <taxon>Helicobacter</taxon>
    </lineage>
</organism>
<keyword id="KW-0030">Aminoacyl-tRNA synthetase</keyword>
<keyword id="KW-0067">ATP-binding</keyword>
<keyword id="KW-0963">Cytoplasm</keyword>
<keyword id="KW-0436">Ligase</keyword>
<keyword id="KW-0479">Metal-binding</keyword>
<keyword id="KW-0547">Nucleotide-binding</keyword>
<keyword id="KW-0648">Protein biosynthesis</keyword>
<keyword id="KW-1185">Reference proteome</keyword>
<keyword id="KW-0862">Zinc</keyword>